<evidence type="ECO:0000255" key="1">
    <source>
        <dbReference type="HAMAP-Rule" id="MF_00402"/>
    </source>
</evidence>
<evidence type="ECO:0000305" key="2"/>
<accession>Q32CY2</accession>
<sequence>MSNIIKQLEQEQMKQDVPSFRPGDTVEVKVWVVEGSKKRLQAFEGVVIAIRNRGLHSAFTVRKISNGEGVERVFQTHSPVVDSISVKRRGAVRKAKLYYLRERTGKAARIKERLN</sequence>
<name>RL19_SHIDS</name>
<dbReference type="EMBL" id="CP000034">
    <property type="protein sequence ID" value="ABB62823.1"/>
    <property type="molecule type" value="Genomic_DNA"/>
</dbReference>
<dbReference type="RefSeq" id="WP_000065253.1">
    <property type="nucleotide sequence ID" value="NC_007606.1"/>
</dbReference>
<dbReference type="RefSeq" id="YP_404314.1">
    <property type="nucleotide sequence ID" value="NC_007606.1"/>
</dbReference>
<dbReference type="SMR" id="Q32CY2"/>
<dbReference type="STRING" id="300267.SDY_2780"/>
<dbReference type="EnsemblBacteria" id="ABB62823">
    <property type="protein sequence ID" value="ABB62823"/>
    <property type="gene ID" value="SDY_2780"/>
</dbReference>
<dbReference type="GeneID" id="93774456"/>
<dbReference type="KEGG" id="sdy:SDY_2780"/>
<dbReference type="PATRIC" id="fig|300267.13.peg.3351"/>
<dbReference type="HOGENOM" id="CLU_103507_2_1_6"/>
<dbReference type="Proteomes" id="UP000002716">
    <property type="component" value="Chromosome"/>
</dbReference>
<dbReference type="GO" id="GO:0022625">
    <property type="term" value="C:cytosolic large ribosomal subunit"/>
    <property type="evidence" value="ECO:0007669"/>
    <property type="project" value="TreeGrafter"/>
</dbReference>
<dbReference type="GO" id="GO:0003735">
    <property type="term" value="F:structural constituent of ribosome"/>
    <property type="evidence" value="ECO:0007669"/>
    <property type="project" value="InterPro"/>
</dbReference>
<dbReference type="GO" id="GO:0006412">
    <property type="term" value="P:translation"/>
    <property type="evidence" value="ECO:0007669"/>
    <property type="project" value="UniProtKB-UniRule"/>
</dbReference>
<dbReference type="FunFam" id="2.30.30.790:FF:000001">
    <property type="entry name" value="50S ribosomal protein L19"/>
    <property type="match status" value="1"/>
</dbReference>
<dbReference type="Gene3D" id="2.30.30.790">
    <property type="match status" value="1"/>
</dbReference>
<dbReference type="HAMAP" id="MF_00402">
    <property type="entry name" value="Ribosomal_bL19"/>
    <property type="match status" value="1"/>
</dbReference>
<dbReference type="InterPro" id="IPR001857">
    <property type="entry name" value="Ribosomal_bL19"/>
</dbReference>
<dbReference type="InterPro" id="IPR018257">
    <property type="entry name" value="Ribosomal_bL19_CS"/>
</dbReference>
<dbReference type="InterPro" id="IPR038657">
    <property type="entry name" value="Ribosomal_bL19_sf"/>
</dbReference>
<dbReference type="InterPro" id="IPR008991">
    <property type="entry name" value="Translation_prot_SH3-like_sf"/>
</dbReference>
<dbReference type="NCBIfam" id="TIGR01024">
    <property type="entry name" value="rplS_bact"/>
    <property type="match status" value="1"/>
</dbReference>
<dbReference type="PANTHER" id="PTHR15680:SF9">
    <property type="entry name" value="LARGE RIBOSOMAL SUBUNIT PROTEIN BL19M"/>
    <property type="match status" value="1"/>
</dbReference>
<dbReference type="PANTHER" id="PTHR15680">
    <property type="entry name" value="RIBOSOMAL PROTEIN L19"/>
    <property type="match status" value="1"/>
</dbReference>
<dbReference type="Pfam" id="PF01245">
    <property type="entry name" value="Ribosomal_L19"/>
    <property type="match status" value="1"/>
</dbReference>
<dbReference type="PIRSF" id="PIRSF002191">
    <property type="entry name" value="Ribosomal_L19"/>
    <property type="match status" value="1"/>
</dbReference>
<dbReference type="PRINTS" id="PR00061">
    <property type="entry name" value="RIBOSOMALL19"/>
</dbReference>
<dbReference type="SUPFAM" id="SSF50104">
    <property type="entry name" value="Translation proteins SH3-like domain"/>
    <property type="match status" value="1"/>
</dbReference>
<dbReference type="PROSITE" id="PS01015">
    <property type="entry name" value="RIBOSOMAL_L19"/>
    <property type="match status" value="1"/>
</dbReference>
<feature type="chain" id="PRO_0000226872" description="Large ribosomal subunit protein bL19">
    <location>
        <begin position="1"/>
        <end position="115"/>
    </location>
</feature>
<proteinExistence type="inferred from homology"/>
<keyword id="KW-1185">Reference proteome</keyword>
<keyword id="KW-0687">Ribonucleoprotein</keyword>
<keyword id="KW-0689">Ribosomal protein</keyword>
<gene>
    <name evidence="1" type="primary">rplS</name>
    <name type="ordered locus">SDY_2780</name>
</gene>
<reference key="1">
    <citation type="journal article" date="2005" name="Nucleic Acids Res.">
        <title>Genome dynamics and diversity of Shigella species, the etiologic agents of bacillary dysentery.</title>
        <authorList>
            <person name="Yang F."/>
            <person name="Yang J."/>
            <person name="Zhang X."/>
            <person name="Chen L."/>
            <person name="Jiang Y."/>
            <person name="Yan Y."/>
            <person name="Tang X."/>
            <person name="Wang J."/>
            <person name="Xiong Z."/>
            <person name="Dong J."/>
            <person name="Xue Y."/>
            <person name="Zhu Y."/>
            <person name="Xu X."/>
            <person name="Sun L."/>
            <person name="Chen S."/>
            <person name="Nie H."/>
            <person name="Peng J."/>
            <person name="Xu J."/>
            <person name="Wang Y."/>
            <person name="Yuan Z."/>
            <person name="Wen Y."/>
            <person name="Yao Z."/>
            <person name="Shen Y."/>
            <person name="Qiang B."/>
            <person name="Hou Y."/>
            <person name="Yu J."/>
            <person name="Jin Q."/>
        </authorList>
    </citation>
    <scope>NUCLEOTIDE SEQUENCE [LARGE SCALE GENOMIC DNA]</scope>
    <source>
        <strain>Sd197</strain>
    </source>
</reference>
<organism>
    <name type="scientific">Shigella dysenteriae serotype 1 (strain Sd197)</name>
    <dbReference type="NCBI Taxonomy" id="300267"/>
    <lineage>
        <taxon>Bacteria</taxon>
        <taxon>Pseudomonadati</taxon>
        <taxon>Pseudomonadota</taxon>
        <taxon>Gammaproteobacteria</taxon>
        <taxon>Enterobacterales</taxon>
        <taxon>Enterobacteriaceae</taxon>
        <taxon>Shigella</taxon>
    </lineage>
</organism>
<comment type="function">
    <text evidence="1">This protein is located at the 30S-50S ribosomal subunit interface and may play a role in the structure and function of the aminoacyl-tRNA binding site.</text>
</comment>
<comment type="similarity">
    <text evidence="1">Belongs to the bacterial ribosomal protein bL19 family.</text>
</comment>
<protein>
    <recommendedName>
        <fullName evidence="1">Large ribosomal subunit protein bL19</fullName>
    </recommendedName>
    <alternativeName>
        <fullName evidence="2">50S ribosomal protein L19</fullName>
    </alternativeName>
</protein>